<keyword id="KW-0058">Aromatic hydrocarbons catabolism</keyword>
<keyword id="KW-0456">Lyase</keyword>
<keyword id="KW-0460">Magnesium</keyword>
<keyword id="KW-0479">Metal-binding</keyword>
<keyword id="KW-0614">Plasmid</keyword>
<proteinExistence type="evidence at transcript level"/>
<reference key="1">
    <citation type="journal article" date="1997" name="Gene">
        <title>The bphDEF meta-cleavage pathway genes involved in biphenyl/polychlorinated biphenyl degradation are located on a linear plasmid and separated from the initial bphACB genes in Rhodococcus sp. strain RHA1.</title>
        <authorList>
            <person name="Masai E."/>
            <person name="Sugiyama K."/>
            <person name="Iwashita N."/>
            <person name="Shimizu S."/>
            <person name="Hauschild J.E."/>
            <person name="Hatta T."/>
            <person name="Kimbara K."/>
            <person name="Yano K."/>
            <person name="Fukuda M."/>
        </authorList>
    </citation>
    <scope>NUCLEOTIDE SEQUENCE [GENOMIC DNA]</scope>
    <scope>INDUCTION</scope>
</reference>
<reference key="2">
    <citation type="submission" date="2003-09" db="EMBL/GenBank/DDBJ databases">
        <title>Diversity and characterization of aromatic ring hydroxylation dioxygenase genes in Rhodococcus sp. strain RHA1.</title>
        <authorList>
            <person name="Iwasaki T."/>
            <person name="Miyauchi K."/>
            <person name="Masai E."/>
            <person name="Fukuda M."/>
        </authorList>
    </citation>
    <scope>NUCLEOTIDE SEQUENCE [GENOMIC DNA]</scope>
</reference>
<reference key="3">
    <citation type="journal article" date="2006" name="Proc. Natl. Acad. Sci. U.S.A.">
        <title>The complete genome of Rhodococcus sp. RHA1 provides insights into a catabolic powerhouse.</title>
        <authorList>
            <person name="McLeod M.P."/>
            <person name="Warren R.L."/>
            <person name="Hsiao W.W.L."/>
            <person name="Araki N."/>
            <person name="Myhre M."/>
            <person name="Fernandes C."/>
            <person name="Miyazawa D."/>
            <person name="Wong W."/>
            <person name="Lillquist A.L."/>
            <person name="Wang D."/>
            <person name="Dosanjh M."/>
            <person name="Hara H."/>
            <person name="Petrescu A."/>
            <person name="Morin R.D."/>
            <person name="Yang G."/>
            <person name="Stott J.M."/>
            <person name="Schein J.E."/>
            <person name="Shin H."/>
            <person name="Smailus D."/>
            <person name="Siddiqui A.S."/>
            <person name="Marra M.A."/>
            <person name="Jones S.J.M."/>
            <person name="Holt R."/>
            <person name="Brinkman F.S.L."/>
            <person name="Miyauchi K."/>
            <person name="Fukuda M."/>
            <person name="Davies J.E."/>
            <person name="Mohn W.W."/>
            <person name="Eltis L.D."/>
        </authorList>
    </citation>
    <scope>NUCLEOTIDE SEQUENCE [LARGE SCALE GENOMIC DNA]</scope>
    <source>
        <strain>RHA1</strain>
    </source>
</reference>
<organism>
    <name type="scientific">Rhodococcus jostii (strain RHA1)</name>
    <dbReference type="NCBI Taxonomy" id="101510"/>
    <lineage>
        <taxon>Bacteria</taxon>
        <taxon>Bacillati</taxon>
        <taxon>Actinomycetota</taxon>
        <taxon>Actinomycetes</taxon>
        <taxon>Mycobacteriales</taxon>
        <taxon>Nocardiaceae</taxon>
        <taxon>Rhodococcus</taxon>
    </lineage>
</organism>
<comment type="function">
    <text evidence="3">Catalyzes the reversible retro-aldol cleavage of 4-hydroxy-2-oxovalerate to pyruvate and acetaldehyde.</text>
</comment>
<comment type="catalytic activity">
    <reaction>
        <text>(S)-4-hydroxy-2-oxopentanoate = acetaldehyde + pyruvate</text>
        <dbReference type="Rhea" id="RHEA:22624"/>
        <dbReference type="ChEBI" id="CHEBI:15343"/>
        <dbReference type="ChEBI" id="CHEBI:15361"/>
        <dbReference type="ChEBI" id="CHEBI:73143"/>
        <dbReference type="EC" id="4.1.3.39"/>
    </reaction>
</comment>
<comment type="pathway">
    <text>Xenobiotic degradation; biphenyl degradation.</text>
</comment>
<comment type="induction">
    <text evidence="2">By growth on ethylbenzene or biphenyl.</text>
</comment>
<comment type="similarity">
    <text evidence="3">Belongs to the HpcH/HpaI aldolase family.</text>
</comment>
<feature type="chain" id="PRO_0000207097" description="4-hydroxy-2-oxovalerate aldolase">
    <location>
        <begin position="1"/>
        <end position="258"/>
    </location>
</feature>
<feature type="active site" description="Proton acceptor" evidence="1">
    <location>
        <position position="48"/>
    </location>
</feature>
<feature type="binding site" evidence="1">
    <location>
        <position position="149"/>
    </location>
    <ligand>
        <name>substrate</name>
    </ligand>
</feature>
<feature type="binding site" evidence="1">
    <location>
        <position position="151"/>
    </location>
    <ligand>
        <name>Mg(2+)</name>
        <dbReference type="ChEBI" id="CHEBI:18420"/>
    </ligand>
</feature>
<feature type="binding site" evidence="1">
    <location>
        <position position="176"/>
    </location>
    <ligand>
        <name>substrate</name>
    </ligand>
</feature>
<feature type="binding site" evidence="1">
    <location>
        <position position="177"/>
    </location>
    <ligand>
        <name>Mg(2+)</name>
        <dbReference type="ChEBI" id="CHEBI:18420"/>
    </ligand>
</feature>
<feature type="binding site" evidence="1">
    <location>
        <position position="177"/>
    </location>
    <ligand>
        <name>substrate</name>
    </ligand>
</feature>
<feature type="site" description="Transition state stabilizer" evidence="1">
    <location>
        <position position="74"/>
    </location>
</feature>
<feature type="site" description="Increases basicity of active site His" evidence="1">
    <location>
        <position position="88"/>
    </location>
</feature>
<gene>
    <name type="primary">bphF</name>
    <name type="synonym">etbF</name>
    <name type="ordered locus">RHA1_ro10138</name>
</gene>
<sequence length="258" mass="27159">MQSPINSFKKALAEGRTQIGFWLALGDAYSAEVCAGAGFDWLLIDGEHAPQDLRSVLAQLQVIGAYRDCHAAVRVPSADTTVIKQYLDLGAQSLLVPMVDTADEAAAVVRACRYPPGGIRGVGGARASRWGRYPRYLHEADEQVCVVVQAETALALSNLEAIAEVDGIDGVFIGTADLAASLGFPGNPAHPEVQDAILDALQRVRAAGKAPGVLTPVEDLAQKYLAHGAVFVAVGIDTHLLAKQTSALAARFAQVAYS</sequence>
<accession>O05151</accession>
<accession>Q75WN6</accession>
<dbReference type="EC" id="4.1.3.39"/>
<dbReference type="EMBL" id="D78322">
    <property type="protein sequence ID" value="BAA18937.1"/>
    <property type="molecule type" value="Genomic_DNA"/>
</dbReference>
<dbReference type="EMBL" id="AB120955">
    <property type="protein sequence ID" value="BAC92717.1"/>
    <property type="molecule type" value="Genomic_DNA"/>
</dbReference>
<dbReference type="EMBL" id="CP000433">
    <property type="protein sequence ID" value="ABH00331.1"/>
    <property type="molecule type" value="Genomic_DNA"/>
</dbReference>
<dbReference type="PIR" id="JC6327">
    <property type="entry name" value="JC6327"/>
</dbReference>
<dbReference type="RefSeq" id="WP_011600000.1">
    <property type="nucleotide sequence ID" value="NC_008270.1"/>
</dbReference>
<dbReference type="SMR" id="O05151"/>
<dbReference type="KEGG" id="rha:RHA1_ro10138"/>
<dbReference type="HOGENOM" id="CLU_059964_1_0_11"/>
<dbReference type="OrthoDB" id="86160at2"/>
<dbReference type="UniPathway" id="UPA00155"/>
<dbReference type="Proteomes" id="UP000008710">
    <property type="component" value="Plasmid pRHL2"/>
</dbReference>
<dbReference type="GO" id="GO:0005737">
    <property type="term" value="C:cytoplasm"/>
    <property type="evidence" value="ECO:0007669"/>
    <property type="project" value="TreeGrafter"/>
</dbReference>
<dbReference type="GO" id="GO:0008701">
    <property type="term" value="F:4-hydroxy-2-oxovalerate aldolase activity"/>
    <property type="evidence" value="ECO:0007669"/>
    <property type="project" value="UniProtKB-EC"/>
</dbReference>
<dbReference type="GO" id="GO:0016832">
    <property type="term" value="F:aldehyde-lyase activity"/>
    <property type="evidence" value="ECO:0007669"/>
    <property type="project" value="TreeGrafter"/>
</dbReference>
<dbReference type="GO" id="GO:0046872">
    <property type="term" value="F:metal ion binding"/>
    <property type="evidence" value="ECO:0007669"/>
    <property type="project" value="UniProtKB-KW"/>
</dbReference>
<dbReference type="GO" id="GO:0009056">
    <property type="term" value="P:catabolic process"/>
    <property type="evidence" value="ECO:0007669"/>
    <property type="project" value="UniProtKB-KW"/>
</dbReference>
<dbReference type="FunFam" id="3.20.20.60:FF:000004">
    <property type="entry name" value="5-keto-4-deoxy-D-glucarate aldolase"/>
    <property type="match status" value="1"/>
</dbReference>
<dbReference type="Gene3D" id="3.20.20.60">
    <property type="entry name" value="Phosphoenolpyruvate-binding domains"/>
    <property type="match status" value="1"/>
</dbReference>
<dbReference type="InterPro" id="IPR005000">
    <property type="entry name" value="Aldolase/citrate-lyase_domain"/>
</dbReference>
<dbReference type="InterPro" id="IPR050251">
    <property type="entry name" value="HpcH-HpaI_aldolase"/>
</dbReference>
<dbReference type="InterPro" id="IPR015813">
    <property type="entry name" value="Pyrv/PenolPyrv_kinase-like_dom"/>
</dbReference>
<dbReference type="InterPro" id="IPR040442">
    <property type="entry name" value="Pyrv_kinase-like_dom_sf"/>
</dbReference>
<dbReference type="PANTHER" id="PTHR30502">
    <property type="entry name" value="2-KETO-3-DEOXY-L-RHAMNONATE ALDOLASE"/>
    <property type="match status" value="1"/>
</dbReference>
<dbReference type="PANTHER" id="PTHR30502:SF0">
    <property type="entry name" value="PHOSPHOENOLPYRUVATE CARBOXYLASE FAMILY PROTEIN"/>
    <property type="match status" value="1"/>
</dbReference>
<dbReference type="Pfam" id="PF03328">
    <property type="entry name" value="HpcH_HpaI"/>
    <property type="match status" value="1"/>
</dbReference>
<dbReference type="SUPFAM" id="SSF51621">
    <property type="entry name" value="Phosphoenolpyruvate/pyruvate domain"/>
    <property type="match status" value="1"/>
</dbReference>
<name>BPHF_RHOJR</name>
<protein>
    <recommendedName>
        <fullName>4-hydroxy-2-oxovalerate aldolase</fullName>
        <shortName>HOA</shortName>
        <ecNumber>4.1.3.39</ecNumber>
    </recommendedName>
</protein>
<evidence type="ECO:0000250" key="1"/>
<evidence type="ECO:0000269" key="2">
    <source>
    </source>
</evidence>
<evidence type="ECO:0000305" key="3"/>
<geneLocation type="plasmid">
    <name>pRHL2</name>
</geneLocation>